<accession>O87628</accession>
<keyword id="KW-0535">Nitrogen fixation</keyword>
<comment type="similarity">
    <text evidence="1">Belongs to the NifX/NifY family.</text>
</comment>
<evidence type="ECO:0000305" key="1"/>
<protein>
    <recommendedName>
        <fullName>Protein NifX</fullName>
    </recommendedName>
</protein>
<feature type="chain" id="PRO_0000096829" description="Protein NifX">
    <location>
        <begin position="1"/>
        <end position="146"/>
    </location>
</feature>
<gene>
    <name type="primary">nifX</name>
</gene>
<organism>
    <name type="scientific">Herbaspirillum seropedicae</name>
    <dbReference type="NCBI Taxonomy" id="964"/>
    <lineage>
        <taxon>Bacteria</taxon>
        <taxon>Pseudomonadati</taxon>
        <taxon>Pseudomonadota</taxon>
        <taxon>Betaproteobacteria</taxon>
        <taxon>Burkholderiales</taxon>
        <taxon>Oxalobacteraceae</taxon>
        <taxon>Herbaspirillum</taxon>
    </lineage>
</organism>
<name>NIFX_HERSE</name>
<dbReference type="EMBL" id="AF088132">
    <property type="protein sequence ID" value="AAC43021.2"/>
    <property type="molecule type" value="Genomic_DNA"/>
</dbReference>
<dbReference type="SMR" id="O87628"/>
<dbReference type="GO" id="GO:0051540">
    <property type="term" value="F:metal cluster binding"/>
    <property type="evidence" value="ECO:0007669"/>
    <property type="project" value="InterPro"/>
</dbReference>
<dbReference type="GO" id="GO:0009399">
    <property type="term" value="P:nitrogen fixation"/>
    <property type="evidence" value="ECO:0007669"/>
    <property type="project" value="UniProtKB-KW"/>
</dbReference>
<dbReference type="CDD" id="cd00853">
    <property type="entry name" value="NifX"/>
    <property type="match status" value="1"/>
</dbReference>
<dbReference type="Gene3D" id="3.30.420.130">
    <property type="entry name" value="Dinitrogenase iron-molybdenum cofactor biosynthesis domain"/>
    <property type="match status" value="1"/>
</dbReference>
<dbReference type="InterPro" id="IPR003731">
    <property type="entry name" value="Di-Nase_FeMo-co_biosynth"/>
</dbReference>
<dbReference type="InterPro" id="IPR036105">
    <property type="entry name" value="DiNase_FeMo-co_biosyn_sf"/>
</dbReference>
<dbReference type="InterPro" id="IPR013480">
    <property type="entry name" value="NifX"/>
</dbReference>
<dbReference type="InterPro" id="IPR034169">
    <property type="entry name" value="NifX-like"/>
</dbReference>
<dbReference type="InterPro" id="IPR051840">
    <property type="entry name" value="NifX/NifY_domain"/>
</dbReference>
<dbReference type="NCBIfam" id="TIGR02663">
    <property type="entry name" value="nifX"/>
    <property type="match status" value="1"/>
</dbReference>
<dbReference type="PANTHER" id="PTHR33937:SF1">
    <property type="entry name" value="IRON-MOLIBDENUM COFACTOR PROCESSING PROTEIN"/>
    <property type="match status" value="1"/>
</dbReference>
<dbReference type="PANTHER" id="PTHR33937">
    <property type="entry name" value="IRON-MOLYBDENUM PROTEIN-RELATED-RELATED"/>
    <property type="match status" value="1"/>
</dbReference>
<dbReference type="Pfam" id="PF02579">
    <property type="entry name" value="Nitro_FeMo-Co"/>
    <property type="match status" value="1"/>
</dbReference>
<dbReference type="SUPFAM" id="SSF53146">
    <property type="entry name" value="Nitrogenase accessory factor-like"/>
    <property type="match status" value="1"/>
</dbReference>
<sequence length="146" mass="16511">MPWRWPRPFKEKAMKVAFATQELQRVEAHFGWAKNLAVFELWPNGYSFVQTHSFDGDLKEDGDEDKLAPKIEAIKECAILYVAAIGGSGAARVVANRIHPVKVAQAEPILDILDKLQEVLKGTPAPWLRKAMQKGQERVINFEEEV</sequence>
<reference key="1">
    <citation type="journal article" date="1999" name="FEMS Microbiol. Lett.">
        <title>Sequencing and functional analysis of the nifENXorf1orf2 gene cluster of Herbaspirillum seropedicae.</title>
        <authorList>
            <person name="Klassen G."/>
            <person name="Pedrosa F.O."/>
            <person name="Souza E.M."/>
            <person name="Yates M.G."/>
            <person name="Rigo L.U."/>
        </authorList>
    </citation>
    <scope>NUCLEOTIDE SEQUENCE [GENOMIC DNA]</scope>
    <source>
        <strain>ATCC 35893 / DSM 6446 / LMG 6514 / Z78</strain>
    </source>
</reference>
<proteinExistence type="inferred from homology"/>